<evidence type="ECO:0000250" key="1">
    <source>
        <dbReference type="UniProtKB" id="O74896"/>
    </source>
</evidence>
<evidence type="ECO:0000269" key="2">
    <source>
    </source>
</evidence>
<evidence type="ECO:0000269" key="3">
    <source>
    </source>
</evidence>
<evidence type="ECO:0000269" key="4">
    <source>
    </source>
</evidence>
<evidence type="ECO:0000303" key="5">
    <source>
    </source>
</evidence>
<evidence type="ECO:0000303" key="6">
    <source>
    </source>
</evidence>
<evidence type="ECO:0000305" key="7"/>
<evidence type="ECO:0000305" key="8">
    <source>
    </source>
</evidence>
<evidence type="ECO:0000305" key="9">
    <source>
    </source>
</evidence>
<evidence type="ECO:0000312" key="10">
    <source>
        <dbReference type="SGD" id="S000007626"/>
    </source>
</evidence>
<evidence type="ECO:0007829" key="11">
    <source>
        <dbReference type="PDB" id="3V9R"/>
    </source>
</evidence>
<protein>
    <recommendedName>
        <fullName evidence="7">Inner kinetochore subunit MHF1</fullName>
    </recommendedName>
    <alternativeName>
        <fullName evidence="6">CENP-S homolog</fullName>
    </alternativeName>
    <alternativeName>
        <fullName evidence="7">Constitutive centromere-associated network protein MHF1</fullName>
    </alternativeName>
    <alternativeName>
        <fullName evidence="8">MHF histone-fold complex subunit 1</fullName>
    </alternativeName>
    <alternativeName>
        <fullName evidence="5">MPH1-associated histone-fold protein 1</fullName>
    </alternativeName>
</protein>
<proteinExistence type="evidence at protein level"/>
<organism>
    <name type="scientific">Saccharomyces cerevisiae (strain ATCC 204508 / S288c)</name>
    <name type="common">Baker's yeast</name>
    <dbReference type="NCBI Taxonomy" id="559292"/>
    <lineage>
        <taxon>Eukaryota</taxon>
        <taxon>Fungi</taxon>
        <taxon>Dikarya</taxon>
        <taxon>Ascomycota</taxon>
        <taxon>Saccharomycotina</taxon>
        <taxon>Saccharomycetes</taxon>
        <taxon>Saccharomycetales</taxon>
        <taxon>Saccharomycetaceae</taxon>
        <taxon>Saccharomyces</taxon>
    </lineage>
</organism>
<gene>
    <name evidence="5" type="primary">MHF1</name>
    <name evidence="10" type="ordered locus">YOL086W-A</name>
</gene>
<reference key="1">
    <citation type="journal article" date="1997" name="Nature">
        <title>The nucleotide sequence of Saccharomyces cerevisiae chromosome XV.</title>
        <authorList>
            <person name="Dujon B."/>
            <person name="Albermann K."/>
            <person name="Aldea M."/>
            <person name="Alexandraki D."/>
            <person name="Ansorge W."/>
            <person name="Arino J."/>
            <person name="Benes V."/>
            <person name="Bohn C."/>
            <person name="Bolotin-Fukuhara M."/>
            <person name="Bordonne R."/>
            <person name="Boyer J."/>
            <person name="Camasses A."/>
            <person name="Casamayor A."/>
            <person name="Casas C."/>
            <person name="Cheret G."/>
            <person name="Cziepluch C."/>
            <person name="Daignan-Fornier B."/>
            <person name="Dang V.-D."/>
            <person name="de Haan M."/>
            <person name="Delius H."/>
            <person name="Durand P."/>
            <person name="Fairhead C."/>
            <person name="Feldmann H."/>
            <person name="Gaillon L."/>
            <person name="Galisson F."/>
            <person name="Gamo F.-J."/>
            <person name="Gancedo C."/>
            <person name="Goffeau A."/>
            <person name="Goulding S.E."/>
            <person name="Grivell L.A."/>
            <person name="Habbig B."/>
            <person name="Hand N.J."/>
            <person name="Hani J."/>
            <person name="Hattenhorst U."/>
            <person name="Hebling U."/>
            <person name="Hernando Y."/>
            <person name="Herrero E."/>
            <person name="Heumann K."/>
            <person name="Hiesel R."/>
            <person name="Hilger F."/>
            <person name="Hofmann B."/>
            <person name="Hollenberg C.P."/>
            <person name="Hughes B."/>
            <person name="Jauniaux J.-C."/>
            <person name="Kalogeropoulos A."/>
            <person name="Katsoulou C."/>
            <person name="Kordes E."/>
            <person name="Lafuente M.J."/>
            <person name="Landt O."/>
            <person name="Louis E.J."/>
            <person name="Maarse A.C."/>
            <person name="Madania A."/>
            <person name="Mannhaupt G."/>
            <person name="Marck C."/>
            <person name="Martin R.P."/>
            <person name="Mewes H.-W."/>
            <person name="Michaux G."/>
            <person name="Paces V."/>
            <person name="Parle-McDermott A.G."/>
            <person name="Pearson B.M."/>
            <person name="Perrin A."/>
            <person name="Pettersson B."/>
            <person name="Poch O."/>
            <person name="Pohl T.M."/>
            <person name="Poirey R."/>
            <person name="Portetelle D."/>
            <person name="Pujol A."/>
            <person name="Purnelle B."/>
            <person name="Ramezani Rad M."/>
            <person name="Rechmann S."/>
            <person name="Schwager C."/>
            <person name="Schweizer M."/>
            <person name="Sor F."/>
            <person name="Sterky F."/>
            <person name="Tarassov I.A."/>
            <person name="Teodoru C."/>
            <person name="Tettelin H."/>
            <person name="Thierry A."/>
            <person name="Tobiasch E."/>
            <person name="Tzermia M."/>
            <person name="Uhlen M."/>
            <person name="Unseld M."/>
            <person name="Valens M."/>
            <person name="Vandenbol M."/>
            <person name="Vetter I."/>
            <person name="Vlcek C."/>
            <person name="Voet M."/>
            <person name="Volckaert G."/>
            <person name="Voss H."/>
            <person name="Wambutt R."/>
            <person name="Wedler H."/>
            <person name="Wiemann S."/>
            <person name="Winsor B."/>
            <person name="Wolfe K.H."/>
            <person name="Zollner A."/>
            <person name="Zumstein E."/>
            <person name="Kleine K."/>
        </authorList>
    </citation>
    <scope>NUCLEOTIDE SEQUENCE [LARGE SCALE GENOMIC DNA]</scope>
    <source>
        <strain>ATCC 204508 / S288c</strain>
    </source>
</reference>
<reference key="2">
    <citation type="journal article" date="2014" name="G3 (Bethesda)">
        <title>The reference genome sequence of Saccharomyces cerevisiae: Then and now.</title>
        <authorList>
            <person name="Engel S.R."/>
            <person name="Dietrich F.S."/>
            <person name="Fisk D.G."/>
            <person name="Binkley G."/>
            <person name="Balakrishnan R."/>
            <person name="Costanzo M.C."/>
            <person name="Dwight S.S."/>
            <person name="Hitz B.C."/>
            <person name="Karra K."/>
            <person name="Nash R.S."/>
            <person name="Weng S."/>
            <person name="Wong E.D."/>
            <person name="Lloyd P."/>
            <person name="Skrzypek M.S."/>
            <person name="Miyasato S.R."/>
            <person name="Simison M."/>
            <person name="Cherry J.M."/>
        </authorList>
    </citation>
    <scope>GENOME REANNOTATION</scope>
    <source>
        <strain>ATCC 204508 / S288c</strain>
    </source>
</reference>
<reference key="3">
    <citation type="journal article" date="2000" name="FEBS Lett.">
        <title>Genomic exploration of the hemiascomycetous yeasts: 4. The genome of Saccharomyces cerevisiae revisited.</title>
        <authorList>
            <person name="Blandin G."/>
            <person name="Durrens P."/>
            <person name="Tekaia F."/>
            <person name="Aigle M."/>
            <person name="Bolotin-Fukuhara M."/>
            <person name="Bon E."/>
            <person name="Casaregola S."/>
            <person name="de Montigny J."/>
            <person name="Gaillardin C."/>
            <person name="Lepingle A."/>
            <person name="Llorente B."/>
            <person name="Malpertuy A."/>
            <person name="Neuveglise C."/>
            <person name="Ozier-Kalogeropoulos O."/>
            <person name="Perrin A."/>
            <person name="Potier S."/>
            <person name="Souciet J.-L."/>
            <person name="Talla E."/>
            <person name="Toffano-Nioche C."/>
            <person name="Wesolowski-Louvel M."/>
            <person name="Marck C."/>
            <person name="Dujon B."/>
        </authorList>
    </citation>
    <scope>GENOME REANNOTATION</scope>
</reference>
<reference key="4">
    <citation type="journal article" date="2010" name="Mol. Cell">
        <title>A histone-fold complex and FANCM form a conserved DNA-remodeling complex to maintain genome stability.</title>
        <authorList>
            <person name="Yan Z."/>
            <person name="Delannoy M."/>
            <person name="Ling C."/>
            <person name="Daee D."/>
            <person name="Osman F."/>
            <person name="Muniandy P.A."/>
            <person name="Shen X."/>
            <person name="Oostra A.B."/>
            <person name="Du H."/>
            <person name="Steltenpool J."/>
            <person name="Lin T."/>
            <person name="Schuster B."/>
            <person name="Decaillet C."/>
            <person name="Stasiak A."/>
            <person name="Stasiak A.Z."/>
            <person name="Stone S."/>
            <person name="Hoatlin M.E."/>
            <person name="Schindler D."/>
            <person name="Woodcock C.L."/>
            <person name="Joenje H."/>
            <person name="Sen R."/>
            <person name="de Winter J.P."/>
            <person name="Li L."/>
            <person name="Seidman M.M."/>
            <person name="Whitby M.C."/>
            <person name="Myung K."/>
            <person name="Constantinousend A."/>
            <person name="Wang W."/>
        </authorList>
    </citation>
    <scope>FUNCTION</scope>
    <scope>INTERACTION WITH MHF2</scope>
</reference>
<reference key="5">
    <citation type="journal article" date="2012" name="Nat. Cell Biol.">
        <title>CENP-T proteins are conserved centromere receptors of the Ndc80 complex.</title>
        <authorList>
            <person name="Schleiffer A."/>
            <person name="Maier M."/>
            <person name="Litos G."/>
            <person name="Lampert F."/>
            <person name="Hornung P."/>
            <person name="Mechtler K."/>
            <person name="Westermann S."/>
        </authorList>
    </citation>
    <scope>IDENTIFICATION IN CCAN</scope>
    <scope>SUBUNIT</scope>
</reference>
<reference key="6">
    <citation type="journal article" date="2012" name="Structure">
        <title>Saccharomyces cerevisiae MHF complex structurally resembles the histones (H3-H4)(2) heterotetramer and functions as a heterotetramer.</title>
        <authorList>
            <person name="Yang H."/>
            <person name="Zhang T."/>
            <person name="Tao Y."/>
            <person name="Wu L."/>
            <person name="Li H.T."/>
            <person name="Zhou J.Q."/>
            <person name="Zhong C."/>
            <person name="Ding J."/>
        </authorList>
    </citation>
    <scope>X-RAY CRYSTALLOGRAPHY (2.40 ANGSTROMS)</scope>
    <scope>SUBUNIT</scope>
    <scope>MUTAGENESIS OF ASP-55; HIS-62 AND 78-ARG-LYS-79</scope>
</reference>
<comment type="function">
    <text evidence="1 2 4">dsDNA-binding component of a FANCM-MHF complex involved in DNA damage repair and genome maintenance (PubMed:20347428). FANCM-MHF promotes gene conversion at blocked replication forks, probably by reversal of the stalled fork (By similarity). Component of the kinetochore, a multiprotein complex that assembles on centromeric DNA and attaches chromosomes to spindle microtubules, mediating chromosome segregation and sister chromatid segregation during meiosis and mitosis. Component of the inner kinetochore constitutive centromere-associated network (CCAN), which serves as a structural platform for outer kinetochore assembly (PubMed:22561346).</text>
</comment>
<comment type="subunit">
    <text evidence="3 9">The MHF histone-fold complex is a heterotetramer of 2 MHF1-MHF2 heterodimers. Together with MPH1/FANCM, forms the FANCM-MHF complex. Component of the inner kinetochore constitutive centromere-associated network (CCAN) (also known as central kinetochore CTF19 complex in yeast), which is composed of at least AME1, CHL4, CNN1, CTF3, CTF19, IML3, MCM16, MCM21, MCM22, MHF1, MHF2, MIF2, NKP1, NKP2, OKP1 and WIP1 (Probable).</text>
</comment>
<comment type="interaction">
    <interactant intactId="EBI-2881690">
        <id>Q3E835</id>
    </interactant>
    <interactant intactId="EBI-15968870">
        <id>Q3E829</id>
        <label>MHF2</label>
    </interactant>
    <organismsDiffer>false</organismsDiffer>
    <experiments>3</experiments>
</comment>
<comment type="similarity">
    <text evidence="7">Belongs to the TAF9 family. CENP-S/MHF1 subfamily.</text>
</comment>
<feature type="chain" id="PRO_0000235928" description="Inner kinetochore subunit MHF1">
    <location>
        <begin position="1"/>
        <end position="90"/>
    </location>
</feature>
<feature type="mutagenesis site" description="Disrupts the heterotetrameric state and becomes hypersensitive to MMS; when associated with A-62." evidence="3">
    <original>D</original>
    <variation>A</variation>
    <location>
        <position position="55"/>
    </location>
</feature>
<feature type="mutagenesis site" description="Disrupts the heterotetrameric state and becomes hypersensitive to MMS; when associated with A-55 or 78-AA-79." evidence="3">
    <original>H</original>
    <variation>A</variation>
    <location>
        <position position="62"/>
    </location>
</feature>
<feature type="mutagenesis site" description="Disrupts the heterotetrameric state and becomes hypersensitive to MMS; when associated with A-62." evidence="3">
    <original>RK</original>
    <variation>AA</variation>
    <location>
        <begin position="78"/>
        <end position="79"/>
    </location>
</feature>
<feature type="helix" evidence="11">
    <location>
        <begin position="3"/>
        <end position="25"/>
    </location>
</feature>
<feature type="helix" evidence="11">
    <location>
        <begin position="35"/>
        <end position="62"/>
    </location>
</feature>
<feature type="strand" evidence="11">
    <location>
        <begin position="66"/>
        <end position="68"/>
    </location>
</feature>
<feature type="helix" evidence="11">
    <location>
        <begin position="70"/>
        <end position="76"/>
    </location>
</feature>
<feature type="turn" evidence="11">
    <location>
        <begin position="77"/>
        <end position="79"/>
    </location>
</feature>
<feature type="helix" evidence="11">
    <location>
        <begin position="81"/>
        <end position="87"/>
    </location>
</feature>
<dbReference type="EMBL" id="Z74828">
    <property type="status" value="NOT_ANNOTATED_CDS"/>
    <property type="molecule type" value="Genomic_DNA"/>
</dbReference>
<dbReference type="EMBL" id="BK006948">
    <property type="protein sequence ID" value="DAA10698.1"/>
    <property type="molecule type" value="Genomic_DNA"/>
</dbReference>
<dbReference type="RefSeq" id="NP_076910.1">
    <property type="nucleotide sequence ID" value="NM_001184492.1"/>
</dbReference>
<dbReference type="PDB" id="3V9R">
    <property type="method" value="X-ray"/>
    <property type="resolution" value="2.40 A"/>
    <property type="chains" value="A/C=1-90"/>
</dbReference>
<dbReference type="PDBsum" id="3V9R"/>
<dbReference type="SMR" id="Q3E835"/>
<dbReference type="BioGRID" id="34316">
    <property type="interactions" value="20"/>
</dbReference>
<dbReference type="ComplexPortal" id="CPX-2533">
    <property type="entry name" value="Kinetochore CCAN complex"/>
</dbReference>
<dbReference type="DIP" id="DIP-59641N"/>
<dbReference type="FunCoup" id="Q3E835">
    <property type="interactions" value="87"/>
</dbReference>
<dbReference type="IntAct" id="Q3E835">
    <property type="interactions" value="2"/>
</dbReference>
<dbReference type="STRING" id="4932.YOL086W-A"/>
<dbReference type="iPTMnet" id="Q3E835"/>
<dbReference type="PaxDb" id="4932-YOL086W-A"/>
<dbReference type="PeptideAtlas" id="Q3E835"/>
<dbReference type="EnsemblFungi" id="YOL086W-A_mRNA">
    <property type="protein sequence ID" value="YOL086W-A"/>
    <property type="gene ID" value="YOL086W-A"/>
</dbReference>
<dbReference type="GeneID" id="854067"/>
<dbReference type="KEGG" id="sce:YOL086W-A"/>
<dbReference type="AGR" id="SGD:S000007626"/>
<dbReference type="SGD" id="S000007626">
    <property type="gene designation" value="MHF1"/>
</dbReference>
<dbReference type="VEuPathDB" id="FungiDB:YOL086W-A"/>
<dbReference type="eggNOG" id="ENOG502S7WI">
    <property type="taxonomic scope" value="Eukaryota"/>
</dbReference>
<dbReference type="HOGENOM" id="CLU_100369_3_1_1"/>
<dbReference type="InParanoid" id="Q3E835"/>
<dbReference type="OMA" id="WTQIENV"/>
<dbReference type="OrthoDB" id="1872155at2759"/>
<dbReference type="BioCyc" id="YEAST:G3O-33896-MONOMER"/>
<dbReference type="BioGRID-ORCS" id="854067">
    <property type="hits" value="0 hits in 10 CRISPR screens"/>
</dbReference>
<dbReference type="EvolutionaryTrace" id="Q3E835"/>
<dbReference type="PRO" id="PR:Q3E835"/>
<dbReference type="Proteomes" id="UP000002311">
    <property type="component" value="Chromosome XV"/>
</dbReference>
<dbReference type="RNAct" id="Q3E835">
    <property type="molecule type" value="protein"/>
</dbReference>
<dbReference type="GO" id="GO:0071821">
    <property type="term" value="C:FANCM-MHF complex"/>
    <property type="evidence" value="ECO:0000314"/>
    <property type="project" value="SGD"/>
</dbReference>
<dbReference type="GO" id="GO:0003682">
    <property type="term" value="F:chromatin binding"/>
    <property type="evidence" value="ECO:0000318"/>
    <property type="project" value="GO_Central"/>
</dbReference>
<dbReference type="GO" id="GO:0003677">
    <property type="term" value="F:DNA binding"/>
    <property type="evidence" value="ECO:0007669"/>
    <property type="project" value="UniProtKB-KW"/>
</dbReference>
<dbReference type="GO" id="GO:0046982">
    <property type="term" value="F:protein heterodimerization activity"/>
    <property type="evidence" value="ECO:0007669"/>
    <property type="project" value="InterPro"/>
</dbReference>
<dbReference type="GO" id="GO:0006974">
    <property type="term" value="P:DNA damage response"/>
    <property type="evidence" value="ECO:0000316"/>
    <property type="project" value="SGD"/>
</dbReference>
<dbReference type="GO" id="GO:0006281">
    <property type="term" value="P:DNA repair"/>
    <property type="evidence" value="ECO:0007669"/>
    <property type="project" value="UniProtKB-KW"/>
</dbReference>
<dbReference type="GO" id="GO:0031297">
    <property type="term" value="P:replication fork processing"/>
    <property type="evidence" value="ECO:0000318"/>
    <property type="project" value="GO_Central"/>
</dbReference>
<dbReference type="GO" id="GO:0000712">
    <property type="term" value="P:resolution of meiotic recombination intermediates"/>
    <property type="evidence" value="ECO:0000318"/>
    <property type="project" value="GO_Central"/>
</dbReference>
<dbReference type="CDD" id="cd22919">
    <property type="entry name" value="HFD_CENP-S"/>
    <property type="match status" value="1"/>
</dbReference>
<dbReference type="FunFam" id="1.10.20.10:FF:000144">
    <property type="entry name" value="Conserved protein"/>
    <property type="match status" value="1"/>
</dbReference>
<dbReference type="Gene3D" id="1.10.20.10">
    <property type="entry name" value="Histone, subunit A"/>
    <property type="match status" value="1"/>
</dbReference>
<dbReference type="InterPro" id="IPR029003">
    <property type="entry name" value="CENP-S/Mhf1"/>
</dbReference>
<dbReference type="InterPro" id="IPR009072">
    <property type="entry name" value="Histone-fold"/>
</dbReference>
<dbReference type="PANTHER" id="PTHR22980:SF0">
    <property type="entry name" value="CENTROMERE PROTEIN S"/>
    <property type="match status" value="1"/>
</dbReference>
<dbReference type="PANTHER" id="PTHR22980">
    <property type="entry name" value="CORTISTATIN"/>
    <property type="match status" value="1"/>
</dbReference>
<dbReference type="Pfam" id="PF15630">
    <property type="entry name" value="CENP-S"/>
    <property type="match status" value="1"/>
</dbReference>
<dbReference type="SUPFAM" id="SSF47113">
    <property type="entry name" value="Histone-fold"/>
    <property type="match status" value="1"/>
</dbReference>
<accession>Q3E835</accession>
<accession>D6W1Y2</accession>
<keyword id="KW-0002">3D-structure</keyword>
<keyword id="KW-0227">DNA damage</keyword>
<keyword id="KW-0234">DNA repair</keyword>
<keyword id="KW-0238">DNA-binding</keyword>
<keyword id="KW-1185">Reference proteome</keyword>
<name>CENPS_YEAST</name>
<sequence length="90" mass="10549">MNDDEDRAQLKARLWIRVEERLQQVLSSEDIKYTPRFINSLLELAYLQLGEMGSDLQAFARHAGRGVVNKSDLMLYLRKQPDLQERVTQE</sequence>